<reference key="1">
    <citation type="journal article" date="2001" name="Science">
        <title>Mechanisms of evolution in Rickettsia conorii and R. prowazekii.</title>
        <authorList>
            <person name="Ogata H."/>
            <person name="Audic S."/>
            <person name="Renesto-Audiffren P."/>
            <person name="Fournier P.-E."/>
            <person name="Barbe V."/>
            <person name="Samson D."/>
            <person name="Roux V."/>
            <person name="Cossart P."/>
            <person name="Weissenbach J."/>
            <person name="Claverie J.-M."/>
            <person name="Raoult D."/>
        </authorList>
    </citation>
    <scope>NUCLEOTIDE SEQUENCE [LARGE SCALE GENOMIC DNA]</scope>
    <source>
        <strain>ATCC VR-613 / Malish 7</strain>
    </source>
</reference>
<comment type="function">
    <text evidence="1">Protease subunit of a proteasome-like degradation complex believed to be a general protein degrading machinery.</text>
</comment>
<comment type="catalytic activity">
    <reaction evidence="1">
        <text>ATP-dependent cleavage of peptide bonds with broad specificity.</text>
        <dbReference type="EC" id="3.4.25.2"/>
    </reaction>
</comment>
<comment type="activity regulation">
    <text evidence="1">Allosterically activated by HslU binding.</text>
</comment>
<comment type="subunit">
    <text evidence="1">A double ring-shaped homohexamer of HslV is capped on each side by a ring-shaped HslU homohexamer. The assembly of the HslU/HslV complex is dependent on binding of ATP.</text>
</comment>
<comment type="subcellular location">
    <subcellularLocation>
        <location evidence="1">Cytoplasm</location>
    </subcellularLocation>
</comment>
<comment type="similarity">
    <text evidence="1">Belongs to the peptidase T1B family. HslV subfamily.</text>
</comment>
<proteinExistence type="inferred from homology"/>
<protein>
    <recommendedName>
        <fullName evidence="1">ATP-dependent protease subunit HslV</fullName>
        <ecNumber evidence="1">3.4.25.2</ecNumber>
    </recommendedName>
</protein>
<feature type="chain" id="PRO_0000148139" description="ATP-dependent protease subunit HslV">
    <location>
        <begin position="1"/>
        <end position="182"/>
    </location>
</feature>
<feature type="active site" evidence="1">
    <location>
        <position position="10"/>
    </location>
</feature>
<feature type="binding site" evidence="1">
    <location>
        <position position="166"/>
    </location>
    <ligand>
        <name>Na(+)</name>
        <dbReference type="ChEBI" id="CHEBI:29101"/>
    </ligand>
</feature>
<feature type="binding site" evidence="1">
    <location>
        <position position="169"/>
    </location>
    <ligand>
        <name>Na(+)</name>
        <dbReference type="ChEBI" id="CHEBI:29101"/>
    </ligand>
</feature>
<feature type="binding site" evidence="1">
    <location>
        <position position="172"/>
    </location>
    <ligand>
        <name>Na(+)</name>
        <dbReference type="ChEBI" id="CHEBI:29101"/>
    </ligand>
</feature>
<organism>
    <name type="scientific">Rickettsia conorii (strain ATCC VR-613 / Malish 7)</name>
    <dbReference type="NCBI Taxonomy" id="272944"/>
    <lineage>
        <taxon>Bacteria</taxon>
        <taxon>Pseudomonadati</taxon>
        <taxon>Pseudomonadota</taxon>
        <taxon>Alphaproteobacteria</taxon>
        <taxon>Rickettsiales</taxon>
        <taxon>Rickettsiaceae</taxon>
        <taxon>Rickettsieae</taxon>
        <taxon>Rickettsia</taxon>
        <taxon>spotted fever group</taxon>
    </lineage>
</organism>
<evidence type="ECO:0000255" key="1">
    <source>
        <dbReference type="HAMAP-Rule" id="MF_00248"/>
    </source>
</evidence>
<dbReference type="EC" id="3.4.25.2" evidence="1"/>
<dbReference type="EMBL" id="AE006914">
    <property type="protein sequence ID" value="AAL02971.1"/>
    <property type="molecule type" value="Genomic_DNA"/>
</dbReference>
<dbReference type="PIR" id="A97754">
    <property type="entry name" value="A97754"/>
</dbReference>
<dbReference type="RefSeq" id="WP_004996101.1">
    <property type="nucleotide sequence ID" value="NC_003103.1"/>
</dbReference>
<dbReference type="SMR" id="Q92II7"/>
<dbReference type="GeneID" id="95362094"/>
<dbReference type="KEGG" id="rco:RC0433"/>
<dbReference type="HOGENOM" id="CLU_093872_1_0_5"/>
<dbReference type="Proteomes" id="UP000000816">
    <property type="component" value="Chromosome"/>
</dbReference>
<dbReference type="GO" id="GO:0009376">
    <property type="term" value="C:HslUV protease complex"/>
    <property type="evidence" value="ECO:0007669"/>
    <property type="project" value="UniProtKB-UniRule"/>
</dbReference>
<dbReference type="GO" id="GO:0005839">
    <property type="term" value="C:proteasome core complex"/>
    <property type="evidence" value="ECO:0007669"/>
    <property type="project" value="InterPro"/>
</dbReference>
<dbReference type="GO" id="GO:0046872">
    <property type="term" value="F:metal ion binding"/>
    <property type="evidence" value="ECO:0007669"/>
    <property type="project" value="UniProtKB-KW"/>
</dbReference>
<dbReference type="GO" id="GO:0004298">
    <property type="term" value="F:threonine-type endopeptidase activity"/>
    <property type="evidence" value="ECO:0007669"/>
    <property type="project" value="UniProtKB-KW"/>
</dbReference>
<dbReference type="GO" id="GO:0051603">
    <property type="term" value="P:proteolysis involved in protein catabolic process"/>
    <property type="evidence" value="ECO:0007669"/>
    <property type="project" value="InterPro"/>
</dbReference>
<dbReference type="CDD" id="cd01913">
    <property type="entry name" value="protease_HslV"/>
    <property type="match status" value="1"/>
</dbReference>
<dbReference type="Gene3D" id="3.60.20.10">
    <property type="entry name" value="Glutamine Phosphoribosylpyrophosphate, subunit 1, domain 1"/>
    <property type="match status" value="1"/>
</dbReference>
<dbReference type="HAMAP" id="MF_00248">
    <property type="entry name" value="HslV"/>
    <property type="match status" value="1"/>
</dbReference>
<dbReference type="InterPro" id="IPR022281">
    <property type="entry name" value="ATP-dep_Prtase_HsIV_su"/>
</dbReference>
<dbReference type="InterPro" id="IPR029055">
    <property type="entry name" value="Ntn_hydrolases_N"/>
</dbReference>
<dbReference type="InterPro" id="IPR001353">
    <property type="entry name" value="Proteasome_sua/b"/>
</dbReference>
<dbReference type="InterPro" id="IPR023333">
    <property type="entry name" value="Proteasome_suB-type"/>
</dbReference>
<dbReference type="NCBIfam" id="TIGR03692">
    <property type="entry name" value="ATP_dep_HslV"/>
    <property type="match status" value="1"/>
</dbReference>
<dbReference type="NCBIfam" id="NF003964">
    <property type="entry name" value="PRK05456.1"/>
    <property type="match status" value="1"/>
</dbReference>
<dbReference type="PANTHER" id="PTHR32194:SF0">
    <property type="entry name" value="ATP-DEPENDENT PROTEASE SUBUNIT HSLV"/>
    <property type="match status" value="1"/>
</dbReference>
<dbReference type="PANTHER" id="PTHR32194">
    <property type="entry name" value="METALLOPROTEASE TLDD"/>
    <property type="match status" value="1"/>
</dbReference>
<dbReference type="Pfam" id="PF00227">
    <property type="entry name" value="Proteasome"/>
    <property type="match status" value="1"/>
</dbReference>
<dbReference type="PIRSF" id="PIRSF039093">
    <property type="entry name" value="HslV"/>
    <property type="match status" value="1"/>
</dbReference>
<dbReference type="SUPFAM" id="SSF56235">
    <property type="entry name" value="N-terminal nucleophile aminohydrolases (Ntn hydrolases)"/>
    <property type="match status" value="1"/>
</dbReference>
<dbReference type="PROSITE" id="PS51476">
    <property type="entry name" value="PROTEASOME_BETA_2"/>
    <property type="match status" value="1"/>
</dbReference>
<keyword id="KW-0021">Allosteric enzyme</keyword>
<keyword id="KW-0963">Cytoplasm</keyword>
<keyword id="KW-0378">Hydrolase</keyword>
<keyword id="KW-0479">Metal-binding</keyword>
<keyword id="KW-0645">Protease</keyword>
<keyword id="KW-0915">Sodium</keyword>
<keyword id="KW-0888">Threonine protease</keyword>
<name>HSLV_RICCN</name>
<accession>Q92II7</accession>
<sequence>MSDNLSLHGTTILCLKKNEEIIIAADGQVSHGNTVLKSTARKLRTIANNKIIAGFAGSTADGLALFEKLAVKIEQHKHNLLRSAVELAKDWRSDKYLRRLEAMMIVADRSHILILTGNGDVVEPENNVAAIGSGGLFALSAARALMSYENNLTAEEIALKSMNIAADLCVFSNHNIIMEKVV</sequence>
<gene>
    <name evidence="1" type="primary">hslV</name>
    <name type="ordered locus">RC0433</name>
</gene>